<accession>Q17CQ8</accession>
<evidence type="ECO:0000250" key="1"/>
<evidence type="ECO:0000255" key="2">
    <source>
        <dbReference type="PROSITE-ProRule" id="PRU00092"/>
    </source>
</evidence>
<evidence type="ECO:0000255" key="3">
    <source>
        <dbReference type="PROSITE-ProRule" id="PRU00723"/>
    </source>
</evidence>
<evidence type="ECO:0000256" key="4">
    <source>
        <dbReference type="SAM" id="MobiDB-lite"/>
    </source>
</evidence>
<name>ZGPAT_AEDAE</name>
<reference key="1">
    <citation type="journal article" date="2007" name="Science">
        <title>Genome sequence of Aedes aegypti, a major arbovirus vector.</title>
        <authorList>
            <person name="Nene V."/>
            <person name="Wortman J.R."/>
            <person name="Lawson D."/>
            <person name="Haas B.J."/>
            <person name="Kodira C.D."/>
            <person name="Tu Z.J."/>
            <person name="Loftus B.J."/>
            <person name="Xi Z."/>
            <person name="Megy K."/>
            <person name="Grabherr M."/>
            <person name="Ren Q."/>
            <person name="Zdobnov E.M."/>
            <person name="Lobo N.F."/>
            <person name="Campbell K.S."/>
            <person name="Brown S.E."/>
            <person name="Bonaldo M.F."/>
            <person name="Zhu J."/>
            <person name="Sinkins S.P."/>
            <person name="Hogenkamp D.G."/>
            <person name="Amedeo P."/>
            <person name="Arensburger P."/>
            <person name="Atkinson P.W."/>
            <person name="Bidwell S.L."/>
            <person name="Biedler J."/>
            <person name="Birney E."/>
            <person name="Bruggner R.V."/>
            <person name="Costas J."/>
            <person name="Coy M.R."/>
            <person name="Crabtree J."/>
            <person name="Crawford M."/>
            <person name="DeBruyn B."/>
            <person name="DeCaprio D."/>
            <person name="Eiglmeier K."/>
            <person name="Eisenstadt E."/>
            <person name="El-Dorry H."/>
            <person name="Gelbart W.M."/>
            <person name="Gomes S.L."/>
            <person name="Hammond M."/>
            <person name="Hannick L.I."/>
            <person name="Hogan J.R."/>
            <person name="Holmes M.H."/>
            <person name="Jaffe D."/>
            <person name="Johnston S.J."/>
            <person name="Kennedy R.C."/>
            <person name="Koo H."/>
            <person name="Kravitz S."/>
            <person name="Kriventseva E.V."/>
            <person name="Kulp D."/>
            <person name="Labutti K."/>
            <person name="Lee E."/>
            <person name="Li S."/>
            <person name="Lovin D.D."/>
            <person name="Mao C."/>
            <person name="Mauceli E."/>
            <person name="Menck C.F."/>
            <person name="Miller J.R."/>
            <person name="Montgomery P."/>
            <person name="Mori A."/>
            <person name="Nascimento A.L."/>
            <person name="Naveira H.F."/>
            <person name="Nusbaum C."/>
            <person name="O'Leary S.B."/>
            <person name="Orvis J."/>
            <person name="Pertea M."/>
            <person name="Quesneville H."/>
            <person name="Reidenbach K.R."/>
            <person name="Rogers Y.-H.C."/>
            <person name="Roth C.W."/>
            <person name="Schneider J.R."/>
            <person name="Schatz M."/>
            <person name="Shumway M."/>
            <person name="Stanke M."/>
            <person name="Stinson E.O."/>
            <person name="Tubio J.M.C."/>
            <person name="Vanzee J.P."/>
            <person name="Verjovski-Almeida S."/>
            <person name="Werner D."/>
            <person name="White O.R."/>
            <person name="Wyder S."/>
            <person name="Zeng Q."/>
            <person name="Zhao Q."/>
            <person name="Zhao Y."/>
            <person name="Hill C.A."/>
            <person name="Raikhel A.S."/>
            <person name="Soares M.B."/>
            <person name="Knudson D.L."/>
            <person name="Lee N.H."/>
            <person name="Galagan J."/>
            <person name="Salzberg S.L."/>
            <person name="Paulsen I.T."/>
            <person name="Dimopoulos G."/>
            <person name="Collins F.H."/>
            <person name="Bruce B."/>
            <person name="Fraser-Liggett C.M."/>
            <person name="Severson D.W."/>
        </authorList>
    </citation>
    <scope>NUCLEOTIDE SEQUENCE [LARGE SCALE GENOMIC DNA]</scope>
    <source>
        <strain>LVPib12</strain>
    </source>
</reference>
<organism>
    <name type="scientific">Aedes aegypti</name>
    <name type="common">Yellowfever mosquito</name>
    <name type="synonym">Culex aegypti</name>
    <dbReference type="NCBI Taxonomy" id="7159"/>
    <lineage>
        <taxon>Eukaryota</taxon>
        <taxon>Metazoa</taxon>
        <taxon>Ecdysozoa</taxon>
        <taxon>Arthropoda</taxon>
        <taxon>Hexapoda</taxon>
        <taxon>Insecta</taxon>
        <taxon>Pterygota</taxon>
        <taxon>Neoptera</taxon>
        <taxon>Endopterygota</taxon>
        <taxon>Diptera</taxon>
        <taxon>Nematocera</taxon>
        <taxon>Culicoidea</taxon>
        <taxon>Culicidae</taxon>
        <taxon>Culicinae</taxon>
        <taxon>Aedini</taxon>
        <taxon>Aedes</taxon>
        <taxon>Stegomyia</taxon>
    </lineage>
</organism>
<protein>
    <recommendedName>
        <fullName>Zinc finger CCCH-type with G patch domain-containing protein</fullName>
    </recommendedName>
</protein>
<feature type="chain" id="PRO_0000385198" description="Zinc finger CCCH-type with G patch domain-containing protein">
    <location>
        <begin position="1"/>
        <end position="512"/>
    </location>
</feature>
<feature type="domain" description="G-patch" evidence="2">
    <location>
        <begin position="308"/>
        <end position="354"/>
    </location>
</feature>
<feature type="zinc finger region" description="C3H1-type" evidence="3">
    <location>
        <begin position="159"/>
        <end position="186"/>
    </location>
</feature>
<feature type="region of interest" description="Disordered" evidence="4">
    <location>
        <begin position="255"/>
        <end position="280"/>
    </location>
</feature>
<feature type="region of interest" description="Disordered" evidence="4">
    <location>
        <begin position="407"/>
        <end position="432"/>
    </location>
</feature>
<feature type="compositionally biased region" description="Acidic residues" evidence="4">
    <location>
        <begin position="256"/>
        <end position="279"/>
    </location>
</feature>
<feature type="compositionally biased region" description="Low complexity" evidence="4">
    <location>
        <begin position="407"/>
        <end position="417"/>
    </location>
</feature>
<gene>
    <name type="ORF">AAEL004458</name>
</gene>
<comment type="function">
    <text evidence="1">Transcription repressor.</text>
</comment>
<comment type="subcellular location">
    <subcellularLocation>
        <location evidence="1">Nucleus</location>
    </subcellularLocation>
</comment>
<keyword id="KW-0238">DNA-binding</keyword>
<keyword id="KW-0479">Metal-binding</keyword>
<keyword id="KW-0539">Nucleus</keyword>
<keyword id="KW-1185">Reference proteome</keyword>
<keyword id="KW-0678">Repressor</keyword>
<keyword id="KW-0804">Transcription</keyword>
<keyword id="KW-0805">Transcription regulation</keyword>
<keyword id="KW-0862">Zinc</keyword>
<keyword id="KW-0863">Zinc-finger</keyword>
<proteinExistence type="inferred from homology"/>
<sequence>MSGSQDLNDSIRIYNEQLAQVEQALEGTSSGPERESLINLKSDLEELVKLTLETVQHENGDDLNAAASGSNEDDEFALFMREINALDDPGSVDAKPPKPDEVSVDEQEPFKDLVGSKCSAPHIHKWGSKSYHNALICSLDASDLDDVAAKVLFINPTHQEMVPCAYFLEGDCKFNDEMCRFSHGELISINELKEYREPRFELLRKKGCKVLAKNRNRIWSKGTIQTADFETKTCKIQMDEGRHEVELQFENVLPLEGDDVPSSDSESNSDSDEENEDDVVSLQQAQIIERSLLNPAPDQRLGDWEKHTKGIGSKIMLKMGYVVGAGLGSKGEGIVVPVSAQVLPQGRSLDYCMQLREQANGDKNLFSVEKKLQREKRIQEKRDAKNYAANKSKKDVFNFLNSEIFGSSNGSSSSSGSKKPAAKDNQMDLPSCSSKNLNIASLKLSEQMRRLELDIDRLSHSLTRHQPGSKMHSNLQKQIAEKRREISEIKKTEYSISREQQLRNDKRKMTVF</sequence>
<dbReference type="EMBL" id="CH477305">
    <property type="protein sequence ID" value="EAT44138.1"/>
    <property type="molecule type" value="Genomic_DNA"/>
</dbReference>
<dbReference type="SMR" id="Q17CQ8"/>
<dbReference type="FunCoup" id="Q17CQ8">
    <property type="interactions" value="1225"/>
</dbReference>
<dbReference type="STRING" id="7159.Q17CQ8"/>
<dbReference type="PaxDb" id="7159-AAEL004458-PA"/>
<dbReference type="EnsemblMetazoa" id="AAEL004458-RA">
    <property type="protein sequence ID" value="AAEL004458-PA"/>
    <property type="gene ID" value="AAEL004458"/>
</dbReference>
<dbReference type="EnsemblMetazoa" id="AAEL025887-RA">
    <property type="protein sequence ID" value="AAEL025887-PA"/>
    <property type="gene ID" value="AAEL025887"/>
</dbReference>
<dbReference type="GeneID" id="5564857"/>
<dbReference type="KEGG" id="aag:5564857"/>
<dbReference type="VEuPathDB" id="VectorBase:AAEL004458"/>
<dbReference type="VEuPathDB" id="VectorBase:AAEL025887"/>
<dbReference type="eggNOG" id="KOG2185">
    <property type="taxonomic scope" value="Eukaryota"/>
</dbReference>
<dbReference type="HOGENOM" id="CLU_040504_1_0_1"/>
<dbReference type="InParanoid" id="Q17CQ8"/>
<dbReference type="OMA" id="QYTRGIG"/>
<dbReference type="OrthoDB" id="5842926at2759"/>
<dbReference type="PhylomeDB" id="Q17CQ8"/>
<dbReference type="Proteomes" id="UP000008820">
    <property type="component" value="Chromosome 3"/>
</dbReference>
<dbReference type="Proteomes" id="UP000008820">
    <property type="component" value="Unassembled WGS sequence"/>
</dbReference>
<dbReference type="Proteomes" id="UP000682892">
    <property type="component" value="Unassembled WGS sequence"/>
</dbReference>
<dbReference type="GO" id="GO:0005634">
    <property type="term" value="C:nucleus"/>
    <property type="evidence" value="ECO:0007669"/>
    <property type="project" value="UniProtKB-SubCell"/>
</dbReference>
<dbReference type="GO" id="GO:0001227">
    <property type="term" value="F:DNA-binding transcription repressor activity, RNA polymerase II-specific"/>
    <property type="evidence" value="ECO:0007669"/>
    <property type="project" value="TreeGrafter"/>
</dbReference>
<dbReference type="GO" id="GO:0000978">
    <property type="term" value="F:RNA polymerase II cis-regulatory region sequence-specific DNA binding"/>
    <property type="evidence" value="ECO:0007669"/>
    <property type="project" value="TreeGrafter"/>
</dbReference>
<dbReference type="GO" id="GO:0008270">
    <property type="term" value="F:zinc ion binding"/>
    <property type="evidence" value="ECO:0007669"/>
    <property type="project" value="UniProtKB-KW"/>
</dbReference>
<dbReference type="CDD" id="cd20384">
    <property type="entry name" value="Tudor_ZGPAT"/>
    <property type="match status" value="1"/>
</dbReference>
<dbReference type="Gene3D" id="2.30.30.1190">
    <property type="match status" value="1"/>
</dbReference>
<dbReference type="InterPro" id="IPR000467">
    <property type="entry name" value="G_patch_dom"/>
</dbReference>
<dbReference type="InterPro" id="IPR000571">
    <property type="entry name" value="Znf_CCCH"/>
</dbReference>
<dbReference type="PANTHER" id="PTHR46297">
    <property type="entry name" value="ZINC FINGER CCCH-TYPE WITH G PATCH DOMAIN-CONTAINING PROTEIN"/>
    <property type="match status" value="1"/>
</dbReference>
<dbReference type="PANTHER" id="PTHR46297:SF1">
    <property type="entry name" value="ZINC FINGER CCCH-TYPE WITH G PATCH DOMAIN-CONTAINING PROTEIN"/>
    <property type="match status" value="1"/>
</dbReference>
<dbReference type="Pfam" id="PF01585">
    <property type="entry name" value="G-patch"/>
    <property type="match status" value="1"/>
</dbReference>
<dbReference type="SMART" id="SM00443">
    <property type="entry name" value="G_patch"/>
    <property type="match status" value="1"/>
</dbReference>
<dbReference type="SMART" id="SM00356">
    <property type="entry name" value="ZnF_C3H1"/>
    <property type="match status" value="1"/>
</dbReference>
<dbReference type="PROSITE" id="PS50174">
    <property type="entry name" value="G_PATCH"/>
    <property type="match status" value="1"/>
</dbReference>
<dbReference type="PROSITE" id="PS50103">
    <property type="entry name" value="ZF_C3H1"/>
    <property type="match status" value="1"/>
</dbReference>